<sequence>MSENTIYSGLKQLGSHTDIPLTPEEAVLERVANPQEGTPYCVRFTAPEFSSLCPMTGQPDFAHLVIDYVPGKWLVESKSLKLFLFSFRNHGAFHEDCTVTIGKRLVDLLEPEWLRIGGYWYPRGGIPIDVFYQTGAAPLNVWIPEQGVANYRGRG</sequence>
<accession>Q2YRW5</accession>
<organism>
    <name type="scientific">Brucella abortus (strain 2308)</name>
    <dbReference type="NCBI Taxonomy" id="359391"/>
    <lineage>
        <taxon>Bacteria</taxon>
        <taxon>Pseudomonadati</taxon>
        <taxon>Pseudomonadota</taxon>
        <taxon>Alphaproteobacteria</taxon>
        <taxon>Hyphomicrobiales</taxon>
        <taxon>Brucellaceae</taxon>
        <taxon>Brucella/Ochrobactrum group</taxon>
        <taxon>Brucella</taxon>
    </lineage>
</organism>
<comment type="function">
    <text evidence="1">Catalyzes the NADPH-dependent reduction of 7-cyano-7-deazaguanine (preQ0) to 7-aminomethyl-7-deazaguanine (preQ1).</text>
</comment>
<comment type="catalytic activity">
    <reaction evidence="1">
        <text>7-aminomethyl-7-carbaguanine + 2 NADP(+) = 7-cyano-7-deazaguanine + 2 NADPH + 3 H(+)</text>
        <dbReference type="Rhea" id="RHEA:13409"/>
        <dbReference type="ChEBI" id="CHEBI:15378"/>
        <dbReference type="ChEBI" id="CHEBI:45075"/>
        <dbReference type="ChEBI" id="CHEBI:57783"/>
        <dbReference type="ChEBI" id="CHEBI:58349"/>
        <dbReference type="ChEBI" id="CHEBI:58703"/>
        <dbReference type="EC" id="1.7.1.13"/>
    </reaction>
</comment>
<comment type="pathway">
    <text evidence="1">tRNA modification; tRNA-queuosine biosynthesis.</text>
</comment>
<comment type="subcellular location">
    <subcellularLocation>
        <location evidence="1">Cytoplasm</location>
    </subcellularLocation>
</comment>
<comment type="similarity">
    <text evidence="1">Belongs to the GTP cyclohydrolase I family. QueF type 1 subfamily.</text>
</comment>
<keyword id="KW-0963">Cytoplasm</keyword>
<keyword id="KW-0521">NADP</keyword>
<keyword id="KW-0560">Oxidoreductase</keyword>
<keyword id="KW-0671">Queuosine biosynthesis</keyword>
<keyword id="KW-1185">Reference proteome</keyword>
<name>QUEF_BRUA2</name>
<protein>
    <recommendedName>
        <fullName evidence="1">NADPH-dependent 7-cyano-7-deazaguanine reductase</fullName>
        <ecNumber evidence="1">1.7.1.13</ecNumber>
    </recommendedName>
    <alternativeName>
        <fullName evidence="1">7-cyano-7-carbaguanine reductase</fullName>
    </alternativeName>
    <alternativeName>
        <fullName evidence="1">NADPH-dependent nitrile oxidoreductase</fullName>
    </alternativeName>
    <alternativeName>
        <fullName evidence="1">PreQ(0) reductase</fullName>
    </alternativeName>
</protein>
<dbReference type="EC" id="1.7.1.13" evidence="1"/>
<dbReference type="EMBL" id="AM040264">
    <property type="protein sequence ID" value="CAJ11162.1"/>
    <property type="molecule type" value="Genomic_DNA"/>
</dbReference>
<dbReference type="RefSeq" id="WP_002964310.1">
    <property type="nucleotide sequence ID" value="NZ_KN046823.1"/>
</dbReference>
<dbReference type="SMR" id="Q2YRW5"/>
<dbReference type="STRING" id="359391.BAB1_1206"/>
<dbReference type="DNASU" id="3787830"/>
<dbReference type="GeneID" id="93016485"/>
<dbReference type="KEGG" id="bmf:BAB1_1206"/>
<dbReference type="PATRIC" id="fig|359391.11.peg.103"/>
<dbReference type="HOGENOM" id="CLU_102489_0_1_5"/>
<dbReference type="PhylomeDB" id="Q2YRW5"/>
<dbReference type="UniPathway" id="UPA00392"/>
<dbReference type="Proteomes" id="UP000002719">
    <property type="component" value="Chromosome I"/>
</dbReference>
<dbReference type="GO" id="GO:0005737">
    <property type="term" value="C:cytoplasm"/>
    <property type="evidence" value="ECO:0007669"/>
    <property type="project" value="UniProtKB-SubCell"/>
</dbReference>
<dbReference type="GO" id="GO:0033739">
    <property type="term" value="F:preQ1 synthase activity"/>
    <property type="evidence" value="ECO:0007669"/>
    <property type="project" value="UniProtKB-UniRule"/>
</dbReference>
<dbReference type="GO" id="GO:0008616">
    <property type="term" value="P:queuosine biosynthetic process"/>
    <property type="evidence" value="ECO:0007669"/>
    <property type="project" value="UniProtKB-UniRule"/>
</dbReference>
<dbReference type="GO" id="GO:0006400">
    <property type="term" value="P:tRNA modification"/>
    <property type="evidence" value="ECO:0007669"/>
    <property type="project" value="UniProtKB-UniRule"/>
</dbReference>
<dbReference type="Gene3D" id="3.30.1130.10">
    <property type="match status" value="1"/>
</dbReference>
<dbReference type="HAMAP" id="MF_00818">
    <property type="entry name" value="QueF_type1"/>
    <property type="match status" value="1"/>
</dbReference>
<dbReference type="InterPro" id="IPR043133">
    <property type="entry name" value="GTP-CH-I_C/QueF"/>
</dbReference>
<dbReference type="InterPro" id="IPR050084">
    <property type="entry name" value="NADPH_dep_7-cyano-7-deazaG_red"/>
</dbReference>
<dbReference type="InterPro" id="IPR029500">
    <property type="entry name" value="QueF"/>
</dbReference>
<dbReference type="InterPro" id="IPR016856">
    <property type="entry name" value="QueF_type1"/>
</dbReference>
<dbReference type="NCBIfam" id="TIGR03139">
    <property type="entry name" value="QueF-II"/>
    <property type="match status" value="1"/>
</dbReference>
<dbReference type="PANTHER" id="PTHR34354">
    <property type="entry name" value="NADPH-DEPENDENT 7-CYANO-7-DEAZAGUANINE REDUCTASE"/>
    <property type="match status" value="1"/>
</dbReference>
<dbReference type="PANTHER" id="PTHR34354:SF1">
    <property type="entry name" value="NADPH-DEPENDENT 7-CYANO-7-DEAZAGUANINE REDUCTASE"/>
    <property type="match status" value="1"/>
</dbReference>
<dbReference type="Pfam" id="PF14489">
    <property type="entry name" value="QueF"/>
    <property type="match status" value="1"/>
</dbReference>
<dbReference type="SUPFAM" id="SSF55620">
    <property type="entry name" value="Tetrahydrobiopterin biosynthesis enzymes-like"/>
    <property type="match status" value="1"/>
</dbReference>
<gene>
    <name evidence="1" type="primary">queF</name>
    <name type="ordered locus">BAB1_1206</name>
</gene>
<feature type="chain" id="PRO_0000247679" description="NADPH-dependent 7-cyano-7-deazaguanine reductase">
    <location>
        <begin position="1"/>
        <end position="155"/>
    </location>
</feature>
<feature type="active site" description="Thioimide intermediate" evidence="1">
    <location>
        <position position="53"/>
    </location>
</feature>
<feature type="active site" description="Proton donor" evidence="1">
    <location>
        <position position="60"/>
    </location>
</feature>
<feature type="binding site" evidence="1">
    <location>
        <begin position="75"/>
        <end position="77"/>
    </location>
    <ligand>
        <name>substrate</name>
    </ligand>
</feature>
<feature type="binding site" evidence="1">
    <location>
        <begin position="94"/>
        <end position="95"/>
    </location>
    <ligand>
        <name>substrate</name>
    </ligand>
</feature>
<reference key="1">
    <citation type="journal article" date="2005" name="Infect. Immun.">
        <title>Whole-genome analyses of speciation events in pathogenic Brucellae.</title>
        <authorList>
            <person name="Chain P.S."/>
            <person name="Comerci D.J."/>
            <person name="Tolmasky M.E."/>
            <person name="Larimer F.W."/>
            <person name="Malfatti S.A."/>
            <person name="Vergez L.M."/>
            <person name="Aguero F."/>
            <person name="Land M.L."/>
            <person name="Ugalde R.A."/>
            <person name="Garcia E."/>
        </authorList>
    </citation>
    <scope>NUCLEOTIDE SEQUENCE [LARGE SCALE GENOMIC DNA]</scope>
    <source>
        <strain>2308</strain>
    </source>
</reference>
<proteinExistence type="inferred from homology"/>
<evidence type="ECO:0000255" key="1">
    <source>
        <dbReference type="HAMAP-Rule" id="MF_00818"/>
    </source>
</evidence>